<organism>
    <name type="scientific">Stenotrophomonas maltophilia (strain R551-3)</name>
    <dbReference type="NCBI Taxonomy" id="391008"/>
    <lineage>
        <taxon>Bacteria</taxon>
        <taxon>Pseudomonadati</taxon>
        <taxon>Pseudomonadota</taxon>
        <taxon>Gammaproteobacteria</taxon>
        <taxon>Lysobacterales</taxon>
        <taxon>Lysobacteraceae</taxon>
        <taxon>Stenotrophomonas</taxon>
        <taxon>Stenotrophomonas maltophilia group</taxon>
    </lineage>
</organism>
<name>RPIA_STRM5</name>
<evidence type="ECO:0000255" key="1">
    <source>
        <dbReference type="HAMAP-Rule" id="MF_00170"/>
    </source>
</evidence>
<accession>B4SI18</accession>
<protein>
    <recommendedName>
        <fullName evidence="1">Ribose-5-phosphate isomerase A</fullName>
        <ecNumber evidence="1">5.3.1.6</ecNumber>
    </recommendedName>
    <alternativeName>
        <fullName evidence="1">Phosphoriboisomerase A</fullName>
        <shortName evidence="1">PRI</shortName>
    </alternativeName>
</protein>
<proteinExistence type="inferred from homology"/>
<dbReference type="EC" id="5.3.1.6" evidence="1"/>
<dbReference type="EMBL" id="CP001111">
    <property type="protein sequence ID" value="ACF52982.1"/>
    <property type="molecule type" value="Genomic_DNA"/>
</dbReference>
<dbReference type="RefSeq" id="WP_012512008.1">
    <property type="nucleotide sequence ID" value="NC_011071.1"/>
</dbReference>
<dbReference type="SMR" id="B4SI18"/>
<dbReference type="STRING" id="391008.Smal_3283"/>
<dbReference type="KEGG" id="smt:Smal_3283"/>
<dbReference type="eggNOG" id="COG0120">
    <property type="taxonomic scope" value="Bacteria"/>
</dbReference>
<dbReference type="HOGENOM" id="CLU_056590_1_1_6"/>
<dbReference type="OrthoDB" id="5870696at2"/>
<dbReference type="UniPathway" id="UPA00115">
    <property type="reaction ID" value="UER00412"/>
</dbReference>
<dbReference type="Proteomes" id="UP000001867">
    <property type="component" value="Chromosome"/>
</dbReference>
<dbReference type="GO" id="GO:0005829">
    <property type="term" value="C:cytosol"/>
    <property type="evidence" value="ECO:0007669"/>
    <property type="project" value="TreeGrafter"/>
</dbReference>
<dbReference type="GO" id="GO:0004751">
    <property type="term" value="F:ribose-5-phosphate isomerase activity"/>
    <property type="evidence" value="ECO:0007669"/>
    <property type="project" value="UniProtKB-UniRule"/>
</dbReference>
<dbReference type="GO" id="GO:0006014">
    <property type="term" value="P:D-ribose metabolic process"/>
    <property type="evidence" value="ECO:0007669"/>
    <property type="project" value="TreeGrafter"/>
</dbReference>
<dbReference type="GO" id="GO:0009052">
    <property type="term" value="P:pentose-phosphate shunt, non-oxidative branch"/>
    <property type="evidence" value="ECO:0007669"/>
    <property type="project" value="UniProtKB-UniRule"/>
</dbReference>
<dbReference type="CDD" id="cd01398">
    <property type="entry name" value="RPI_A"/>
    <property type="match status" value="1"/>
</dbReference>
<dbReference type="FunFam" id="3.30.70.260:FF:000004">
    <property type="entry name" value="Ribose-5-phosphate isomerase A"/>
    <property type="match status" value="1"/>
</dbReference>
<dbReference type="FunFam" id="3.40.50.1360:FF:000001">
    <property type="entry name" value="Ribose-5-phosphate isomerase A"/>
    <property type="match status" value="1"/>
</dbReference>
<dbReference type="Gene3D" id="3.30.70.260">
    <property type="match status" value="1"/>
</dbReference>
<dbReference type="Gene3D" id="3.40.50.1360">
    <property type="match status" value="1"/>
</dbReference>
<dbReference type="HAMAP" id="MF_00170">
    <property type="entry name" value="Rib_5P_isom_A"/>
    <property type="match status" value="1"/>
</dbReference>
<dbReference type="InterPro" id="IPR037171">
    <property type="entry name" value="NagB/RpiA_transferase-like"/>
</dbReference>
<dbReference type="InterPro" id="IPR020672">
    <property type="entry name" value="Ribose5P_isomerase_typA_subgr"/>
</dbReference>
<dbReference type="InterPro" id="IPR004788">
    <property type="entry name" value="Ribose5P_isomerase_type_A"/>
</dbReference>
<dbReference type="NCBIfam" id="NF001924">
    <property type="entry name" value="PRK00702.1"/>
    <property type="match status" value="1"/>
</dbReference>
<dbReference type="NCBIfam" id="TIGR00021">
    <property type="entry name" value="rpiA"/>
    <property type="match status" value="1"/>
</dbReference>
<dbReference type="PANTHER" id="PTHR11934">
    <property type="entry name" value="RIBOSE-5-PHOSPHATE ISOMERASE"/>
    <property type="match status" value="1"/>
</dbReference>
<dbReference type="PANTHER" id="PTHR11934:SF0">
    <property type="entry name" value="RIBOSE-5-PHOSPHATE ISOMERASE"/>
    <property type="match status" value="1"/>
</dbReference>
<dbReference type="Pfam" id="PF06026">
    <property type="entry name" value="Rib_5-P_isom_A"/>
    <property type="match status" value="1"/>
</dbReference>
<dbReference type="SUPFAM" id="SSF75445">
    <property type="entry name" value="D-ribose-5-phosphate isomerase (RpiA), lid domain"/>
    <property type="match status" value="1"/>
</dbReference>
<dbReference type="SUPFAM" id="SSF100950">
    <property type="entry name" value="NagB/RpiA/CoA transferase-like"/>
    <property type="match status" value="1"/>
</dbReference>
<keyword id="KW-0413">Isomerase</keyword>
<gene>
    <name evidence="1" type="primary">rpiA</name>
    <name type="ordered locus">Smal_3283</name>
</gene>
<sequence length="215" mass="23247">MSEAKRLAAEKAIEYVEDGMIVGVGTGSTVAYFIDALARIQHRIKGAVSSSEQSTARLKQHGIEVIELNHSGNLSLYVDGADECDANKCLIKGGGAALTREKIIAEASERFICIVDPSKQVPVLGKFPLPVEVIPMARSLIARQIRDMTGGQPTWREGVVTDNGNQILDIHNLQITDPEKLERELNQLPGVVCVGLFARRRADVVIVGGEPPVVL</sequence>
<feature type="chain" id="PRO_1000097696" description="Ribose-5-phosphate isomerase A">
    <location>
        <begin position="1"/>
        <end position="215"/>
    </location>
</feature>
<feature type="active site" description="Proton acceptor" evidence="1">
    <location>
        <position position="101"/>
    </location>
</feature>
<feature type="binding site" evidence="1">
    <location>
        <begin position="26"/>
        <end position="29"/>
    </location>
    <ligand>
        <name>substrate</name>
    </ligand>
</feature>
<feature type="binding site" evidence="1">
    <location>
        <begin position="79"/>
        <end position="82"/>
    </location>
    <ligand>
        <name>substrate</name>
    </ligand>
</feature>
<feature type="binding site" evidence="1">
    <location>
        <begin position="92"/>
        <end position="95"/>
    </location>
    <ligand>
        <name>substrate</name>
    </ligand>
</feature>
<feature type="binding site" evidence="1">
    <location>
        <position position="119"/>
    </location>
    <ligand>
        <name>substrate</name>
    </ligand>
</feature>
<reference key="1">
    <citation type="submission" date="2008-06" db="EMBL/GenBank/DDBJ databases">
        <title>Complete sequence of Stenotrophomonas maltophilia R551-3.</title>
        <authorList>
            <consortium name="US DOE Joint Genome Institute"/>
            <person name="Lucas S."/>
            <person name="Copeland A."/>
            <person name="Lapidus A."/>
            <person name="Glavina del Rio T."/>
            <person name="Dalin E."/>
            <person name="Tice H."/>
            <person name="Pitluck S."/>
            <person name="Chain P."/>
            <person name="Malfatti S."/>
            <person name="Shin M."/>
            <person name="Vergez L."/>
            <person name="Lang D."/>
            <person name="Schmutz J."/>
            <person name="Larimer F."/>
            <person name="Land M."/>
            <person name="Hauser L."/>
            <person name="Kyrpides N."/>
            <person name="Mikhailova N."/>
            <person name="Taghavi S."/>
            <person name="Monchy S."/>
            <person name="Newman L."/>
            <person name="Vangronsveld J."/>
            <person name="van der Lelie D."/>
            <person name="Richardson P."/>
        </authorList>
    </citation>
    <scope>NUCLEOTIDE SEQUENCE [LARGE SCALE GENOMIC DNA]</scope>
    <source>
        <strain>R551-3</strain>
    </source>
</reference>
<comment type="function">
    <text evidence="1">Catalyzes the reversible conversion of ribose-5-phosphate to ribulose 5-phosphate.</text>
</comment>
<comment type="catalytic activity">
    <reaction evidence="1">
        <text>aldehydo-D-ribose 5-phosphate = D-ribulose 5-phosphate</text>
        <dbReference type="Rhea" id="RHEA:14657"/>
        <dbReference type="ChEBI" id="CHEBI:58121"/>
        <dbReference type="ChEBI" id="CHEBI:58273"/>
        <dbReference type="EC" id="5.3.1.6"/>
    </reaction>
</comment>
<comment type="pathway">
    <text evidence="1">Carbohydrate degradation; pentose phosphate pathway; D-ribose 5-phosphate from D-ribulose 5-phosphate (non-oxidative stage): step 1/1.</text>
</comment>
<comment type="subunit">
    <text evidence="1">Homodimer.</text>
</comment>
<comment type="similarity">
    <text evidence="1">Belongs to the ribose 5-phosphate isomerase family.</text>
</comment>